<proteinExistence type="inferred from homology"/>
<evidence type="ECO:0000255" key="1">
    <source>
        <dbReference type="HAMAP-Rule" id="MF_01633"/>
    </source>
</evidence>
<dbReference type="EC" id="6.3.4.20" evidence="1"/>
<dbReference type="EMBL" id="CP000377">
    <property type="protein sequence ID" value="ABF64779.1"/>
    <property type="molecule type" value="Genomic_DNA"/>
</dbReference>
<dbReference type="RefSeq" id="WP_011539371.1">
    <property type="nucleotide sequence ID" value="NC_008044.1"/>
</dbReference>
<dbReference type="SMR" id="Q1GEY7"/>
<dbReference type="STRING" id="292414.TM1040_2047"/>
<dbReference type="KEGG" id="sit:TM1040_2047"/>
<dbReference type="eggNOG" id="COG0603">
    <property type="taxonomic scope" value="Bacteria"/>
</dbReference>
<dbReference type="HOGENOM" id="CLU_081854_1_0_5"/>
<dbReference type="OrthoDB" id="9789567at2"/>
<dbReference type="UniPathway" id="UPA00391"/>
<dbReference type="Proteomes" id="UP000000636">
    <property type="component" value="Chromosome"/>
</dbReference>
<dbReference type="GO" id="GO:0005524">
    <property type="term" value="F:ATP binding"/>
    <property type="evidence" value="ECO:0007669"/>
    <property type="project" value="UniProtKB-UniRule"/>
</dbReference>
<dbReference type="GO" id="GO:0016879">
    <property type="term" value="F:ligase activity, forming carbon-nitrogen bonds"/>
    <property type="evidence" value="ECO:0007669"/>
    <property type="project" value="UniProtKB-UniRule"/>
</dbReference>
<dbReference type="GO" id="GO:0008270">
    <property type="term" value="F:zinc ion binding"/>
    <property type="evidence" value="ECO:0007669"/>
    <property type="project" value="UniProtKB-UniRule"/>
</dbReference>
<dbReference type="GO" id="GO:0008616">
    <property type="term" value="P:queuosine biosynthetic process"/>
    <property type="evidence" value="ECO:0007669"/>
    <property type="project" value="UniProtKB-UniRule"/>
</dbReference>
<dbReference type="CDD" id="cd01995">
    <property type="entry name" value="QueC-like"/>
    <property type="match status" value="1"/>
</dbReference>
<dbReference type="Gene3D" id="3.40.50.620">
    <property type="entry name" value="HUPs"/>
    <property type="match status" value="1"/>
</dbReference>
<dbReference type="HAMAP" id="MF_01633">
    <property type="entry name" value="QueC"/>
    <property type="match status" value="1"/>
</dbReference>
<dbReference type="InterPro" id="IPR018317">
    <property type="entry name" value="QueC"/>
</dbReference>
<dbReference type="InterPro" id="IPR014729">
    <property type="entry name" value="Rossmann-like_a/b/a_fold"/>
</dbReference>
<dbReference type="NCBIfam" id="TIGR00364">
    <property type="entry name" value="7-cyano-7-deazaguanine synthase QueC"/>
    <property type="match status" value="1"/>
</dbReference>
<dbReference type="PANTHER" id="PTHR42914">
    <property type="entry name" value="7-CYANO-7-DEAZAGUANINE SYNTHASE"/>
    <property type="match status" value="1"/>
</dbReference>
<dbReference type="PANTHER" id="PTHR42914:SF1">
    <property type="entry name" value="7-CYANO-7-DEAZAGUANINE SYNTHASE"/>
    <property type="match status" value="1"/>
</dbReference>
<dbReference type="Pfam" id="PF06508">
    <property type="entry name" value="QueC"/>
    <property type="match status" value="1"/>
</dbReference>
<dbReference type="PIRSF" id="PIRSF006293">
    <property type="entry name" value="ExsB"/>
    <property type="match status" value="1"/>
</dbReference>
<dbReference type="SUPFAM" id="SSF52402">
    <property type="entry name" value="Adenine nucleotide alpha hydrolases-like"/>
    <property type="match status" value="1"/>
</dbReference>
<keyword id="KW-0067">ATP-binding</keyword>
<keyword id="KW-0436">Ligase</keyword>
<keyword id="KW-0479">Metal-binding</keyword>
<keyword id="KW-0547">Nucleotide-binding</keyword>
<keyword id="KW-0671">Queuosine biosynthesis</keyword>
<keyword id="KW-1185">Reference proteome</keyword>
<keyword id="KW-0862">Zinc</keyword>
<organism>
    <name type="scientific">Ruegeria sp. (strain TM1040)</name>
    <name type="common">Silicibacter sp.</name>
    <dbReference type="NCBI Taxonomy" id="292414"/>
    <lineage>
        <taxon>Bacteria</taxon>
        <taxon>Pseudomonadati</taxon>
        <taxon>Pseudomonadota</taxon>
        <taxon>Alphaproteobacteria</taxon>
        <taxon>Rhodobacterales</taxon>
        <taxon>Roseobacteraceae</taxon>
        <taxon>Ruegeria</taxon>
    </lineage>
</organism>
<comment type="function">
    <text evidence="1">Catalyzes the ATP-dependent conversion of 7-carboxy-7-deazaguanine (CDG) to 7-cyano-7-deazaguanine (preQ(0)).</text>
</comment>
<comment type="catalytic activity">
    <reaction evidence="1">
        <text>7-carboxy-7-deazaguanine + NH4(+) + ATP = 7-cyano-7-deazaguanine + ADP + phosphate + H2O + H(+)</text>
        <dbReference type="Rhea" id="RHEA:27982"/>
        <dbReference type="ChEBI" id="CHEBI:15377"/>
        <dbReference type="ChEBI" id="CHEBI:15378"/>
        <dbReference type="ChEBI" id="CHEBI:28938"/>
        <dbReference type="ChEBI" id="CHEBI:30616"/>
        <dbReference type="ChEBI" id="CHEBI:43474"/>
        <dbReference type="ChEBI" id="CHEBI:45075"/>
        <dbReference type="ChEBI" id="CHEBI:61036"/>
        <dbReference type="ChEBI" id="CHEBI:456216"/>
        <dbReference type="EC" id="6.3.4.20"/>
    </reaction>
</comment>
<comment type="cofactor">
    <cofactor evidence="1">
        <name>Zn(2+)</name>
        <dbReference type="ChEBI" id="CHEBI:29105"/>
    </cofactor>
    <text evidence="1">Binds 1 zinc ion per subunit.</text>
</comment>
<comment type="pathway">
    <text evidence="1">Purine metabolism; 7-cyano-7-deazaguanine biosynthesis.</text>
</comment>
<comment type="similarity">
    <text evidence="1">Belongs to the QueC family.</text>
</comment>
<protein>
    <recommendedName>
        <fullName evidence="1">7-cyano-7-deazaguanine synthase</fullName>
        <ecNumber evidence="1">6.3.4.20</ecNumber>
    </recommendedName>
    <alternativeName>
        <fullName evidence="1">7-cyano-7-carbaguanine synthase</fullName>
    </alternativeName>
    <alternativeName>
        <fullName evidence="1">PreQ(0) synthase</fullName>
    </alternativeName>
    <alternativeName>
        <fullName evidence="1">Queuosine biosynthesis protein QueC</fullName>
    </alternativeName>
</protein>
<gene>
    <name evidence="1" type="primary">queC</name>
    <name type="ordered locus">TM1040_2047</name>
</gene>
<reference key="1">
    <citation type="submission" date="2006-05" db="EMBL/GenBank/DDBJ databases">
        <title>Complete sequence of chromosome of Silicibacter sp. TM1040.</title>
        <authorList>
            <consortium name="US DOE Joint Genome Institute"/>
            <person name="Copeland A."/>
            <person name="Lucas S."/>
            <person name="Lapidus A."/>
            <person name="Barry K."/>
            <person name="Detter J.C."/>
            <person name="Glavina del Rio T."/>
            <person name="Hammon N."/>
            <person name="Israni S."/>
            <person name="Dalin E."/>
            <person name="Tice H."/>
            <person name="Pitluck S."/>
            <person name="Brettin T."/>
            <person name="Bruce D."/>
            <person name="Han C."/>
            <person name="Tapia R."/>
            <person name="Goodwin L."/>
            <person name="Thompson L.S."/>
            <person name="Gilna P."/>
            <person name="Schmutz J."/>
            <person name="Larimer F."/>
            <person name="Land M."/>
            <person name="Hauser L."/>
            <person name="Kyrpides N."/>
            <person name="Kim E."/>
            <person name="Belas R."/>
            <person name="Moran M.A."/>
            <person name="Buchan A."/>
            <person name="Gonzalez J.M."/>
            <person name="Schell M.A."/>
            <person name="Sun F."/>
            <person name="Richardson P."/>
        </authorList>
    </citation>
    <scope>NUCLEOTIDE SEQUENCE [LARGE SCALE GENOMIC DNA]</scope>
    <source>
        <strain>TM1040</strain>
    </source>
</reference>
<feature type="chain" id="PRO_0000255927" description="7-cyano-7-deazaguanine synthase">
    <location>
        <begin position="1"/>
        <end position="233"/>
    </location>
</feature>
<feature type="binding site" evidence="1">
    <location>
        <begin position="7"/>
        <end position="17"/>
    </location>
    <ligand>
        <name>ATP</name>
        <dbReference type="ChEBI" id="CHEBI:30616"/>
    </ligand>
</feature>
<feature type="binding site" evidence="1">
    <location>
        <position position="185"/>
    </location>
    <ligand>
        <name>Zn(2+)</name>
        <dbReference type="ChEBI" id="CHEBI:29105"/>
    </ligand>
</feature>
<feature type="binding site" evidence="1">
    <location>
        <position position="193"/>
    </location>
    <ligand>
        <name>Zn(2+)</name>
        <dbReference type="ChEBI" id="CHEBI:29105"/>
    </ligand>
</feature>
<feature type="binding site" evidence="1">
    <location>
        <position position="196"/>
    </location>
    <ligand>
        <name>Zn(2+)</name>
        <dbReference type="ChEBI" id="CHEBI:29105"/>
    </ligand>
</feature>
<feature type="binding site" evidence="1">
    <location>
        <position position="199"/>
    </location>
    <ligand>
        <name>Zn(2+)</name>
        <dbReference type="ChEBI" id="CHEBI:29105"/>
    </ligand>
</feature>
<name>QUEC_RUEST</name>
<accession>Q1GEY7</accession>
<sequence length="233" mass="25248">MKTLVICSGGLDSVSLAHITSQKYQLTRLVSFDYGQRHRKELDFARAAATRLGVPFHLIDMRSIGGALSGSALTDDIDVPDGHYAEDTMRITVVPNRNAIMLAIGFGVAAAQGDEAVATAVHGGDHFIYPDCRPGFTRAFETMQRAALDGYADVRLHTPFVEQSKADIVRAGAAHNTPFAETWSCYKGGDIHCGRCGTCVERREAFHLAEVADPTVYADPDYWSAAIAGREAE</sequence>